<name>MATK_CALPE</name>
<dbReference type="EMBL" id="AF368201">
    <property type="protein sequence ID" value="AAL37569.3"/>
    <property type="molecule type" value="Genomic_DNA"/>
</dbReference>
<dbReference type="GO" id="GO:0009507">
    <property type="term" value="C:chloroplast"/>
    <property type="evidence" value="ECO:0007669"/>
    <property type="project" value="UniProtKB-SubCell"/>
</dbReference>
<dbReference type="GO" id="GO:0003723">
    <property type="term" value="F:RNA binding"/>
    <property type="evidence" value="ECO:0007669"/>
    <property type="project" value="UniProtKB-KW"/>
</dbReference>
<dbReference type="GO" id="GO:0006397">
    <property type="term" value="P:mRNA processing"/>
    <property type="evidence" value="ECO:0007669"/>
    <property type="project" value="UniProtKB-KW"/>
</dbReference>
<dbReference type="GO" id="GO:0008380">
    <property type="term" value="P:RNA splicing"/>
    <property type="evidence" value="ECO:0007669"/>
    <property type="project" value="UniProtKB-UniRule"/>
</dbReference>
<dbReference type="GO" id="GO:0008033">
    <property type="term" value="P:tRNA processing"/>
    <property type="evidence" value="ECO:0007669"/>
    <property type="project" value="UniProtKB-KW"/>
</dbReference>
<dbReference type="HAMAP" id="MF_01390">
    <property type="entry name" value="MatK"/>
    <property type="match status" value="1"/>
</dbReference>
<dbReference type="InterPro" id="IPR024937">
    <property type="entry name" value="Domain_X"/>
</dbReference>
<dbReference type="InterPro" id="IPR002866">
    <property type="entry name" value="Maturase_MatK"/>
</dbReference>
<dbReference type="InterPro" id="IPR024942">
    <property type="entry name" value="Maturase_MatK_N"/>
</dbReference>
<dbReference type="PANTHER" id="PTHR34811">
    <property type="entry name" value="MATURASE K"/>
    <property type="match status" value="1"/>
</dbReference>
<dbReference type="PANTHER" id="PTHR34811:SF1">
    <property type="entry name" value="MATURASE K"/>
    <property type="match status" value="1"/>
</dbReference>
<dbReference type="Pfam" id="PF01348">
    <property type="entry name" value="Intron_maturas2"/>
    <property type="match status" value="1"/>
</dbReference>
<dbReference type="Pfam" id="PF01824">
    <property type="entry name" value="MatK_N"/>
    <property type="match status" value="1"/>
</dbReference>
<organism>
    <name type="scientific">Calyptranthes pallens</name>
    <name type="common">Spicewood</name>
    <name type="synonym">Chytraculia pallens</name>
    <dbReference type="NCBI Taxonomy" id="178121"/>
    <lineage>
        <taxon>Eukaryota</taxon>
        <taxon>Viridiplantae</taxon>
        <taxon>Streptophyta</taxon>
        <taxon>Embryophyta</taxon>
        <taxon>Tracheophyta</taxon>
        <taxon>Spermatophyta</taxon>
        <taxon>Magnoliopsida</taxon>
        <taxon>eudicotyledons</taxon>
        <taxon>Gunneridae</taxon>
        <taxon>Pentapetalae</taxon>
        <taxon>rosids</taxon>
        <taxon>malvids</taxon>
        <taxon>Myrtales</taxon>
        <taxon>Myrtaceae</taxon>
        <taxon>Myrtoideae</taxon>
        <taxon>Myrteae</taxon>
        <taxon>Myrcia group</taxon>
        <taxon>Calyptranthes</taxon>
    </lineage>
</organism>
<sequence length="504" mass="60147">MEEFQGYLELDRSRQHDFLYPLLFREYIYALAHDHVLLNRSIFFENAGYYNKSSSIIVKRLITRMYQQNXLIFSANDSIQNPFFGHNNNLYSQIFSEGFAVIVEIPFSLRLVSSLERKEIAKSHNLRSIHSIFPFLEDKFSHLDYVLDVLMPYHIHLEILVQTLRYWVKDASSLHLLRFFLHEYWNSLITPKKHIPIFSKGNPRLFLFLYNSHMCEYESILLFLRNQSSHLRSTSSGIFFERIYFYVKIEHFAKXFFDNDFQCILWFFKDPFMHYVKYQGKSILASKDTPLFMNKWKYYLVNLWQYHFYAWFQPGRININQLCNYSIDFLGYRSSVRLNSSVVRSQMLENSFIINNAIKKFETIVPIIPLIGSLSKANFCNTLGHPISKPTRADSSDSDIIDRFLRICRNLSHYHSGSSKKKSLYRVKYILRLSCVKTLARKHKRTVRTFLKRLGSEFLEEFLTEEEVVLSLIFPRTYSTSRRLYRGQIWYLDITSINDLVNYE</sequence>
<comment type="function">
    <text evidence="1">Usually encoded in the trnK tRNA gene intron. Probably assists in splicing its own and other chloroplast group II introns.</text>
</comment>
<comment type="subcellular location">
    <subcellularLocation>
        <location>Plastid</location>
        <location>Chloroplast</location>
    </subcellularLocation>
</comment>
<comment type="similarity">
    <text evidence="1">Belongs to the intron maturase 2 family. MatK subfamily.</text>
</comment>
<accession>Q8W7A1</accession>
<keyword id="KW-0150">Chloroplast</keyword>
<keyword id="KW-0507">mRNA processing</keyword>
<keyword id="KW-0934">Plastid</keyword>
<keyword id="KW-0694">RNA-binding</keyword>
<keyword id="KW-0819">tRNA processing</keyword>
<reference key="1">
    <citation type="journal article" date="2005" name="Plant Syst. Evol.">
        <title>Relationships within Myrtaceae sensu lato based on a matK phylogeny.</title>
        <authorList>
            <person name="Wilson P.G."/>
            <person name="O'Brien M.M."/>
            <person name="Heslewood M.M."/>
            <person name="Quinn C.J."/>
        </authorList>
    </citation>
    <scope>NUCLEOTIDE SEQUENCE [GENOMIC DNA]</scope>
</reference>
<reference key="2">
    <citation type="submission" date="2012-08" db="EMBL/GenBank/DDBJ databases">
        <authorList>
            <person name="Wilson P.G."/>
            <person name="O'Brien M.M."/>
            <person name="Heslewood M.M."/>
            <person name="Quinn C.J."/>
        </authorList>
    </citation>
    <scope>SEQUENCE REVISION TO 22</scope>
</reference>
<protein>
    <recommendedName>
        <fullName evidence="1">Maturase K</fullName>
    </recommendedName>
    <alternativeName>
        <fullName evidence="1">Intron maturase</fullName>
    </alternativeName>
</protein>
<feature type="chain" id="PRO_0000143302" description="Maturase K">
    <location>
        <begin position="1"/>
        <end position="504"/>
    </location>
</feature>
<feature type="unsure residue" description="I or L">
    <location>
        <position position="22"/>
    </location>
</feature>
<gene>
    <name evidence="1" type="primary">matK</name>
</gene>
<evidence type="ECO:0000255" key="1">
    <source>
        <dbReference type="HAMAP-Rule" id="MF_01390"/>
    </source>
</evidence>
<proteinExistence type="inferred from homology"/>
<geneLocation type="chloroplast"/>